<protein>
    <recommendedName>
        <fullName evidence="1">Phosphoribosylaminoimidazole-succinocarboxamide synthase</fullName>
        <ecNumber evidence="1">6.3.2.6</ecNumber>
    </recommendedName>
    <alternativeName>
        <fullName evidence="1">SAICAR synthetase</fullName>
    </alternativeName>
</protein>
<comment type="catalytic activity">
    <reaction evidence="1">
        <text>5-amino-1-(5-phospho-D-ribosyl)imidazole-4-carboxylate + L-aspartate + ATP = (2S)-2-[5-amino-1-(5-phospho-beta-D-ribosyl)imidazole-4-carboxamido]succinate + ADP + phosphate + 2 H(+)</text>
        <dbReference type="Rhea" id="RHEA:22628"/>
        <dbReference type="ChEBI" id="CHEBI:15378"/>
        <dbReference type="ChEBI" id="CHEBI:29991"/>
        <dbReference type="ChEBI" id="CHEBI:30616"/>
        <dbReference type="ChEBI" id="CHEBI:43474"/>
        <dbReference type="ChEBI" id="CHEBI:58443"/>
        <dbReference type="ChEBI" id="CHEBI:77657"/>
        <dbReference type="ChEBI" id="CHEBI:456216"/>
        <dbReference type="EC" id="6.3.2.6"/>
    </reaction>
</comment>
<comment type="pathway">
    <text evidence="1">Purine metabolism; IMP biosynthesis via de novo pathway; 5-amino-1-(5-phospho-D-ribosyl)imidazole-4-carboxamide from 5-amino-1-(5-phospho-D-ribosyl)imidazole-4-carboxylate: step 1/2.</text>
</comment>
<comment type="similarity">
    <text evidence="1">Belongs to the SAICAR synthetase family.</text>
</comment>
<organism>
    <name type="scientific">Geobacter sp. (strain M21)</name>
    <dbReference type="NCBI Taxonomy" id="443144"/>
    <lineage>
        <taxon>Bacteria</taxon>
        <taxon>Pseudomonadati</taxon>
        <taxon>Thermodesulfobacteriota</taxon>
        <taxon>Desulfuromonadia</taxon>
        <taxon>Geobacterales</taxon>
        <taxon>Geobacteraceae</taxon>
        <taxon>Geobacter</taxon>
    </lineage>
</organism>
<proteinExistence type="inferred from homology"/>
<reference key="1">
    <citation type="submission" date="2009-07" db="EMBL/GenBank/DDBJ databases">
        <title>Complete sequence of Geobacter sp. M21.</title>
        <authorList>
            <consortium name="US DOE Joint Genome Institute"/>
            <person name="Lucas S."/>
            <person name="Copeland A."/>
            <person name="Lapidus A."/>
            <person name="Glavina del Rio T."/>
            <person name="Dalin E."/>
            <person name="Tice H."/>
            <person name="Bruce D."/>
            <person name="Goodwin L."/>
            <person name="Pitluck S."/>
            <person name="Saunders E."/>
            <person name="Brettin T."/>
            <person name="Detter J.C."/>
            <person name="Han C."/>
            <person name="Larimer F."/>
            <person name="Land M."/>
            <person name="Hauser L."/>
            <person name="Kyrpides N."/>
            <person name="Ovchinnikova G."/>
            <person name="Lovley D."/>
        </authorList>
    </citation>
    <scope>NUCLEOTIDE SEQUENCE [LARGE SCALE GENOMIC DNA]</scope>
    <source>
        <strain>M21</strain>
    </source>
</reference>
<accession>C6E6C1</accession>
<gene>
    <name evidence="1" type="primary">purC</name>
    <name type="ordered locus">GM21_1708</name>
</gene>
<dbReference type="EC" id="6.3.2.6" evidence="1"/>
<dbReference type="EMBL" id="CP001661">
    <property type="protein sequence ID" value="ACT17762.1"/>
    <property type="molecule type" value="Genomic_DNA"/>
</dbReference>
<dbReference type="SMR" id="C6E6C1"/>
<dbReference type="STRING" id="443144.GM21_1708"/>
<dbReference type="KEGG" id="gem:GM21_1708"/>
<dbReference type="eggNOG" id="COG0152">
    <property type="taxonomic scope" value="Bacteria"/>
</dbReference>
<dbReference type="HOGENOM" id="CLU_045637_0_0_7"/>
<dbReference type="OrthoDB" id="9801549at2"/>
<dbReference type="UniPathway" id="UPA00074">
    <property type="reaction ID" value="UER00131"/>
</dbReference>
<dbReference type="GO" id="GO:0005737">
    <property type="term" value="C:cytoplasm"/>
    <property type="evidence" value="ECO:0007669"/>
    <property type="project" value="TreeGrafter"/>
</dbReference>
<dbReference type="GO" id="GO:0005524">
    <property type="term" value="F:ATP binding"/>
    <property type="evidence" value="ECO:0007669"/>
    <property type="project" value="UniProtKB-KW"/>
</dbReference>
<dbReference type="GO" id="GO:0004639">
    <property type="term" value="F:phosphoribosylaminoimidazolesuccinocarboxamide synthase activity"/>
    <property type="evidence" value="ECO:0007669"/>
    <property type="project" value="UniProtKB-UniRule"/>
</dbReference>
<dbReference type="GO" id="GO:0006189">
    <property type="term" value="P:'de novo' IMP biosynthetic process"/>
    <property type="evidence" value="ECO:0007669"/>
    <property type="project" value="UniProtKB-UniRule"/>
</dbReference>
<dbReference type="CDD" id="cd01414">
    <property type="entry name" value="SAICAR_synt_Sc"/>
    <property type="match status" value="1"/>
</dbReference>
<dbReference type="FunFam" id="3.30.200.20:FF:000392">
    <property type="entry name" value="Phosphoribosylaminoimidazole-succinocarboxamide synthase"/>
    <property type="match status" value="1"/>
</dbReference>
<dbReference type="FunFam" id="3.30.470.20:FF:000015">
    <property type="entry name" value="Phosphoribosylaminoimidazole-succinocarboxamide synthase"/>
    <property type="match status" value="1"/>
</dbReference>
<dbReference type="Gene3D" id="3.30.470.20">
    <property type="entry name" value="ATP-grasp fold, B domain"/>
    <property type="match status" value="1"/>
</dbReference>
<dbReference type="Gene3D" id="3.30.200.20">
    <property type="entry name" value="Phosphorylase Kinase, domain 1"/>
    <property type="match status" value="1"/>
</dbReference>
<dbReference type="HAMAP" id="MF_00137">
    <property type="entry name" value="SAICAR_synth"/>
    <property type="match status" value="1"/>
</dbReference>
<dbReference type="InterPro" id="IPR028923">
    <property type="entry name" value="SAICAR_synt/ADE2_N"/>
</dbReference>
<dbReference type="InterPro" id="IPR001636">
    <property type="entry name" value="SAICAR_synth"/>
</dbReference>
<dbReference type="NCBIfam" id="NF010568">
    <property type="entry name" value="PRK13961.1"/>
    <property type="match status" value="1"/>
</dbReference>
<dbReference type="NCBIfam" id="TIGR00081">
    <property type="entry name" value="purC"/>
    <property type="match status" value="1"/>
</dbReference>
<dbReference type="PANTHER" id="PTHR43700">
    <property type="entry name" value="PHOSPHORIBOSYLAMINOIMIDAZOLE-SUCCINOCARBOXAMIDE SYNTHASE"/>
    <property type="match status" value="1"/>
</dbReference>
<dbReference type="PANTHER" id="PTHR43700:SF1">
    <property type="entry name" value="PHOSPHORIBOSYLAMINOIMIDAZOLE-SUCCINOCARBOXAMIDE SYNTHASE"/>
    <property type="match status" value="1"/>
</dbReference>
<dbReference type="Pfam" id="PF01259">
    <property type="entry name" value="SAICAR_synt"/>
    <property type="match status" value="1"/>
</dbReference>
<dbReference type="SUPFAM" id="SSF56104">
    <property type="entry name" value="SAICAR synthase-like"/>
    <property type="match status" value="1"/>
</dbReference>
<keyword id="KW-0067">ATP-binding</keyword>
<keyword id="KW-0436">Ligase</keyword>
<keyword id="KW-0547">Nucleotide-binding</keyword>
<keyword id="KW-0658">Purine biosynthesis</keyword>
<feature type="chain" id="PRO_1000203231" description="Phosphoribosylaminoimidazole-succinocarboxamide synthase">
    <location>
        <begin position="1"/>
        <end position="296"/>
    </location>
</feature>
<name>PUR7_GEOSM</name>
<sequence length="296" mass="33114">MTTPVLNTDFPGLKLAARGKVRDIYDLGETLLIVTTDRISAFDVIMNEGIPHKGYVLTQISAYWFRQMEGIIKNHIISTDVADFPKECQPYADVLAGRSMWVKKAQPLAAECIVRGYISGSGWKDYQSTGAICGIKLPEGLKESDRLPQPIFTPSTKAELGTHDENISFEEMCRICGTEISTKVRDVTLAIYEKARDIADQKGIIIADTKFEYGIYEGELIIIDECMTPDSSRFWPKDSYKPGGPQPSFDKQFLRDYLETLDWGKTAPAPPLPEEIVRKTGEKYMEALVKLTGKGI</sequence>
<evidence type="ECO:0000255" key="1">
    <source>
        <dbReference type="HAMAP-Rule" id="MF_00137"/>
    </source>
</evidence>